<accession>P18820</accession>
<feature type="chain" id="PRO_0000189354" description="Ferredoxin">
    <location>
        <begin position="1"/>
        <end position="33" status="greater than"/>
    </location>
</feature>
<feature type="domain" description="2Fe-2S ferredoxin-type" evidence="1">
    <location>
        <begin position="3"/>
        <end position="33" status="greater than"/>
    </location>
</feature>
<feature type="non-terminal residue">
    <location>
        <position position="33"/>
    </location>
</feature>
<organism>
    <name type="scientific">Porphyridium aerugineum</name>
    <name type="common">Red microalga</name>
    <dbReference type="NCBI Taxonomy" id="2792"/>
    <lineage>
        <taxon>Eukaryota</taxon>
        <taxon>Rhodophyta</taxon>
        <taxon>Bangiophyceae</taxon>
        <taxon>Porphyridiales</taxon>
        <taxon>Porphyridiaceae</taxon>
        <taxon>Porphyridium</taxon>
    </lineage>
</organism>
<comment type="function">
    <text>Ferredoxins are iron-sulfur proteins that transfer electrons in a wide variety of metabolic reactions.</text>
</comment>
<comment type="cofactor">
    <cofactor>
        <name>[2Fe-2S] cluster</name>
        <dbReference type="ChEBI" id="CHEBI:190135"/>
    </cofactor>
    <text>Binds 1 [2Fe-2S] cluster.</text>
</comment>
<comment type="subcellular location">
    <subcellularLocation>
        <location>Plastid</location>
        <location>Chloroplast</location>
    </subcellularLocation>
</comment>
<comment type="similarity">
    <text evidence="2">Belongs to the 2Fe2S plant-type ferredoxin family.</text>
</comment>
<dbReference type="PIR" id="JT0022">
    <property type="entry name" value="JT0022"/>
</dbReference>
<dbReference type="SMR" id="P18820"/>
<dbReference type="GO" id="GO:0009507">
    <property type="term" value="C:chloroplast"/>
    <property type="evidence" value="ECO:0007669"/>
    <property type="project" value="UniProtKB-SubCell"/>
</dbReference>
<dbReference type="GO" id="GO:0051537">
    <property type="term" value="F:2 iron, 2 sulfur cluster binding"/>
    <property type="evidence" value="ECO:0007669"/>
    <property type="project" value="UniProtKB-KW"/>
</dbReference>
<dbReference type="GO" id="GO:0046872">
    <property type="term" value="F:metal ion binding"/>
    <property type="evidence" value="ECO:0007669"/>
    <property type="project" value="UniProtKB-KW"/>
</dbReference>
<keyword id="KW-0001">2Fe-2S</keyword>
<keyword id="KW-0150">Chloroplast</keyword>
<keyword id="KW-0903">Direct protein sequencing</keyword>
<keyword id="KW-0249">Electron transport</keyword>
<keyword id="KW-0408">Iron</keyword>
<keyword id="KW-0411">Iron-sulfur</keyword>
<keyword id="KW-0479">Metal-binding</keyword>
<keyword id="KW-0934">Plastid</keyword>
<keyword id="KW-0813">Transport</keyword>
<proteinExistence type="evidence at protein level"/>
<sequence length="33" mass="3641">AKKYKVRLLSEAEGIDVTIDSADDVYILDAAEE</sequence>
<reference key="1">
    <citation type="journal article" date="1981" name="Phytochemistry">
        <title>Comparative properties of ferredoxins from a marine and freshwater species of Porphyridium.</title>
        <authorList>
            <person name="Andrew P.W."/>
            <person name="Rogers L.J."/>
            <person name="Haslett B.G."/>
            <person name="Boulter D."/>
        </authorList>
    </citation>
    <scope>PROTEIN SEQUENCE</scope>
</reference>
<evidence type="ECO:0000255" key="1">
    <source>
        <dbReference type="PROSITE-ProRule" id="PRU00465"/>
    </source>
</evidence>
<evidence type="ECO:0000305" key="2"/>
<name>FER_PORAE</name>
<protein>
    <recommendedName>
        <fullName>Ferredoxin</fullName>
    </recommendedName>
</protein>